<dbReference type="EC" id="3.5.1.9" evidence="1"/>
<dbReference type="EMBL" id="AAVQ01000001">
    <property type="protein sequence ID" value="EAZ63982.2"/>
    <property type="molecule type" value="Genomic_DNA"/>
</dbReference>
<dbReference type="RefSeq" id="XP_001388005.2">
    <property type="nucleotide sequence ID" value="XM_001387968.1"/>
</dbReference>
<dbReference type="SMR" id="A3GGU3"/>
<dbReference type="FunCoup" id="A3GGU3">
    <property type="interactions" value="143"/>
</dbReference>
<dbReference type="STRING" id="322104.A3GGU3"/>
<dbReference type="ESTHER" id="picst-bna7">
    <property type="family name" value="Kynurenine-formamidase"/>
</dbReference>
<dbReference type="GeneID" id="4851492"/>
<dbReference type="KEGG" id="pic:PICST_66527"/>
<dbReference type="eggNOG" id="ENOG502S28Q">
    <property type="taxonomic scope" value="Eukaryota"/>
</dbReference>
<dbReference type="HOGENOM" id="CLU_016852_1_0_1"/>
<dbReference type="InParanoid" id="A3GGU3"/>
<dbReference type="OMA" id="DHYDIMK"/>
<dbReference type="OrthoDB" id="420264at2759"/>
<dbReference type="UniPathway" id="UPA00333">
    <property type="reaction ID" value="UER00454"/>
</dbReference>
<dbReference type="Proteomes" id="UP000002258">
    <property type="component" value="Chromosome 1"/>
</dbReference>
<dbReference type="GO" id="GO:0004061">
    <property type="term" value="F:arylformamidase activity"/>
    <property type="evidence" value="ECO:0007669"/>
    <property type="project" value="UniProtKB-UniRule"/>
</dbReference>
<dbReference type="GO" id="GO:0034354">
    <property type="term" value="P:'de novo' NAD biosynthetic process from L-tryptophan"/>
    <property type="evidence" value="ECO:0007669"/>
    <property type="project" value="UniProtKB-UniRule"/>
</dbReference>
<dbReference type="GO" id="GO:0019441">
    <property type="term" value="P:L-tryptophan catabolic process to kynurenine"/>
    <property type="evidence" value="ECO:0007669"/>
    <property type="project" value="UniProtKB-UniRule"/>
</dbReference>
<dbReference type="Gene3D" id="3.40.50.1820">
    <property type="entry name" value="alpha/beta hydrolase"/>
    <property type="match status" value="1"/>
</dbReference>
<dbReference type="HAMAP" id="MF_03014">
    <property type="entry name" value="KFase"/>
    <property type="match status" value="1"/>
</dbReference>
<dbReference type="InterPro" id="IPR013094">
    <property type="entry name" value="AB_hydrolase_3"/>
</dbReference>
<dbReference type="InterPro" id="IPR029058">
    <property type="entry name" value="AB_hydrolase_fold"/>
</dbReference>
<dbReference type="InterPro" id="IPR050300">
    <property type="entry name" value="GDXG_lipolytic_enzyme"/>
</dbReference>
<dbReference type="InterPro" id="IPR027519">
    <property type="entry name" value="KFase_ver/fungi-typ"/>
</dbReference>
<dbReference type="PANTHER" id="PTHR48081">
    <property type="entry name" value="AB HYDROLASE SUPERFAMILY PROTEIN C4A8.06C"/>
    <property type="match status" value="1"/>
</dbReference>
<dbReference type="PANTHER" id="PTHR48081:SF33">
    <property type="entry name" value="KYNURENINE FORMAMIDASE"/>
    <property type="match status" value="1"/>
</dbReference>
<dbReference type="Pfam" id="PF07859">
    <property type="entry name" value="Abhydrolase_3"/>
    <property type="match status" value="1"/>
</dbReference>
<dbReference type="SUPFAM" id="SSF53474">
    <property type="entry name" value="alpha/beta-Hydrolases"/>
    <property type="match status" value="1"/>
</dbReference>
<accession>A3GGU3</accession>
<sequence>MSEKIVFYGKEQLQRIRIFNYSESNDKTLIVLHGGGWRDPRNSYNDFEDMANYILEEKKATNINIIGIDYRLSPFIKHPVHLIDVLTAFRYILENYKTGQLSIVGHSVGATLLLEILNYVEIIQTGLEQLETSEPSIEELQTLFDFISKNLTFKTMYFLDGIYDVRALLEEYPSYDFFVKSAFVSTVAIEEASQLSWKQHNEAFKIAVDKYEILHSLEDELLSLNQPKLFAKYLQDRKIECSFRTGNWGEHEQVYRSQAVSEHVLQNM</sequence>
<protein>
    <recommendedName>
        <fullName evidence="1">Kynurenine formamidase</fullName>
        <shortName evidence="1">KFA</shortName>
        <shortName evidence="1">KFase</shortName>
        <ecNumber evidence="1">3.5.1.9</ecNumber>
    </recommendedName>
    <alternativeName>
        <fullName evidence="1">Arylformamidase</fullName>
    </alternativeName>
    <alternativeName>
        <fullName evidence="1">N-formylkynurenine formamidase</fullName>
        <shortName evidence="1">FKF</shortName>
    </alternativeName>
</protein>
<evidence type="ECO:0000255" key="1">
    <source>
        <dbReference type="HAMAP-Rule" id="MF_03014"/>
    </source>
</evidence>
<keyword id="KW-0378">Hydrolase</keyword>
<keyword id="KW-1185">Reference proteome</keyword>
<keyword id="KW-0823">Tryptophan catabolism</keyword>
<comment type="function">
    <text evidence="1">Catalyzes the hydrolysis of N-formyl-L-kynurenine to L-kynurenine, the second step in the kynurenine pathway of tryptophan degradation. Kynurenine may be further oxidized to nicotinic acid, NAD(H) and NADP(H). Required for elimination of toxic metabolites.</text>
</comment>
<comment type="catalytic activity">
    <reaction evidence="1">
        <text>N-formyl-L-kynurenine + H2O = L-kynurenine + formate + H(+)</text>
        <dbReference type="Rhea" id="RHEA:13009"/>
        <dbReference type="ChEBI" id="CHEBI:15377"/>
        <dbReference type="ChEBI" id="CHEBI:15378"/>
        <dbReference type="ChEBI" id="CHEBI:15740"/>
        <dbReference type="ChEBI" id="CHEBI:57959"/>
        <dbReference type="ChEBI" id="CHEBI:58629"/>
        <dbReference type="EC" id="3.5.1.9"/>
    </reaction>
</comment>
<comment type="pathway">
    <text evidence="1">Amino-acid degradation; L-tryptophan degradation via kynurenine pathway; L-kynurenine from L-tryptophan: step 2/2.</text>
</comment>
<comment type="subunit">
    <text evidence="1">Homodimer.</text>
</comment>
<comment type="domain">
    <text evidence="1">The main chain amide nitrogen atoms of the second glycine and its adjacent residue in the HGGXW motif define the oxyanion hole, and stabilize the oxyanion that forms during the nucleophilic attack by the catalytic serine during substrate cleavage.</text>
</comment>
<comment type="similarity">
    <text evidence="1">Belongs to the kynurenine formamidase family.</text>
</comment>
<reference key="1">
    <citation type="journal article" date="2007" name="Nat. Biotechnol.">
        <title>Genome sequence of the lignocellulose-bioconverting and xylose-fermenting yeast Pichia stipitis.</title>
        <authorList>
            <person name="Jeffries T.W."/>
            <person name="Grigoriev I.V."/>
            <person name="Grimwood J."/>
            <person name="Laplaza J.M."/>
            <person name="Aerts A."/>
            <person name="Salamov A."/>
            <person name="Schmutz J."/>
            <person name="Lindquist E."/>
            <person name="Dehal P."/>
            <person name="Shapiro H."/>
            <person name="Jin Y.-S."/>
            <person name="Passoth V."/>
            <person name="Richardson P.M."/>
        </authorList>
    </citation>
    <scope>NUCLEOTIDE SEQUENCE [LARGE SCALE GENOMIC DNA]</scope>
    <source>
        <strain>ATCC 58785 / CBS 6054 / NBRC 10063 / NRRL Y-11545</strain>
    </source>
</reference>
<organism>
    <name type="scientific">Scheffersomyces stipitis (strain ATCC 58785 / CBS 6054 / NBRC 10063 / NRRL Y-11545)</name>
    <name type="common">Yeast</name>
    <name type="synonym">Pichia stipitis</name>
    <dbReference type="NCBI Taxonomy" id="322104"/>
    <lineage>
        <taxon>Eukaryota</taxon>
        <taxon>Fungi</taxon>
        <taxon>Dikarya</taxon>
        <taxon>Ascomycota</taxon>
        <taxon>Saccharomycotina</taxon>
        <taxon>Pichiomycetes</taxon>
        <taxon>Debaryomycetaceae</taxon>
        <taxon>Scheffersomyces</taxon>
    </lineage>
</organism>
<gene>
    <name evidence="1" type="primary">BNA7</name>
    <name type="ORF">PICST_66527</name>
</gene>
<name>KFA_PICST</name>
<feature type="chain" id="PRO_0000361884" description="Kynurenine formamidase">
    <location>
        <begin position="1"/>
        <end position="268"/>
    </location>
</feature>
<feature type="short sequence motif" description="HGGXW">
    <location>
        <begin position="33"/>
        <end position="37"/>
    </location>
</feature>
<feature type="active site" description="Nucleophile" evidence="1">
    <location>
        <position position="107"/>
    </location>
</feature>
<feature type="active site" evidence="1">
    <location>
        <position position="219"/>
    </location>
</feature>
<feature type="active site" evidence="1">
    <location>
        <position position="251"/>
    </location>
</feature>
<proteinExistence type="inferred from homology"/>